<gene>
    <name type="primary">TUBB2</name>
</gene>
<organism>
    <name type="scientific">Glycine max</name>
    <name type="common">Soybean</name>
    <name type="synonym">Glycine hispida</name>
    <dbReference type="NCBI Taxonomy" id="3847"/>
    <lineage>
        <taxon>Eukaryota</taxon>
        <taxon>Viridiplantae</taxon>
        <taxon>Streptophyta</taxon>
        <taxon>Embryophyta</taxon>
        <taxon>Tracheophyta</taxon>
        <taxon>Spermatophyta</taxon>
        <taxon>Magnoliopsida</taxon>
        <taxon>eudicotyledons</taxon>
        <taxon>Gunneridae</taxon>
        <taxon>Pentapetalae</taxon>
        <taxon>rosids</taxon>
        <taxon>fabids</taxon>
        <taxon>Fabales</taxon>
        <taxon>Fabaceae</taxon>
        <taxon>Papilionoideae</taxon>
        <taxon>50 kb inversion clade</taxon>
        <taxon>NPAAA clade</taxon>
        <taxon>indigoferoid/millettioid clade</taxon>
        <taxon>Phaseoleae</taxon>
        <taxon>Glycine</taxon>
        <taxon>Glycine subgen. Soja</taxon>
    </lineage>
</organism>
<name>TBB2_SOYBN</name>
<dbReference type="EMBL" id="M21297">
    <property type="protein sequence ID" value="AAA34010.1"/>
    <property type="molecule type" value="Genomic_DNA"/>
</dbReference>
<dbReference type="PIR" id="JA0049">
    <property type="entry name" value="JA0049"/>
</dbReference>
<dbReference type="SMR" id="P12460"/>
<dbReference type="STRING" id="3847.P12460"/>
<dbReference type="PaxDb" id="3847-GLYMA03G15020.1"/>
<dbReference type="ProMEX" id="P12460"/>
<dbReference type="eggNOG" id="KOG1375">
    <property type="taxonomic scope" value="Eukaryota"/>
</dbReference>
<dbReference type="InParanoid" id="P12460"/>
<dbReference type="Proteomes" id="UP000008827">
    <property type="component" value="Unplaced"/>
</dbReference>
<dbReference type="GO" id="GO:0005737">
    <property type="term" value="C:cytoplasm"/>
    <property type="evidence" value="ECO:0000318"/>
    <property type="project" value="GO_Central"/>
</dbReference>
<dbReference type="GO" id="GO:0005874">
    <property type="term" value="C:microtubule"/>
    <property type="evidence" value="ECO:0000318"/>
    <property type="project" value="GO_Central"/>
</dbReference>
<dbReference type="GO" id="GO:0005525">
    <property type="term" value="F:GTP binding"/>
    <property type="evidence" value="ECO:0000318"/>
    <property type="project" value="GO_Central"/>
</dbReference>
<dbReference type="GO" id="GO:0003924">
    <property type="term" value="F:GTPase activity"/>
    <property type="evidence" value="ECO:0007669"/>
    <property type="project" value="InterPro"/>
</dbReference>
<dbReference type="GO" id="GO:0046872">
    <property type="term" value="F:metal ion binding"/>
    <property type="evidence" value="ECO:0007669"/>
    <property type="project" value="UniProtKB-KW"/>
</dbReference>
<dbReference type="GO" id="GO:0005200">
    <property type="term" value="F:structural constituent of cytoskeleton"/>
    <property type="evidence" value="ECO:0000318"/>
    <property type="project" value="GO_Central"/>
</dbReference>
<dbReference type="GO" id="GO:0000226">
    <property type="term" value="P:microtubule cytoskeleton organization"/>
    <property type="evidence" value="ECO:0000318"/>
    <property type="project" value="GO_Central"/>
</dbReference>
<dbReference type="GO" id="GO:0000278">
    <property type="term" value="P:mitotic cell cycle"/>
    <property type="evidence" value="ECO:0000318"/>
    <property type="project" value="GO_Central"/>
</dbReference>
<dbReference type="CDD" id="cd02187">
    <property type="entry name" value="beta_tubulin"/>
    <property type="match status" value="1"/>
</dbReference>
<dbReference type="FunFam" id="1.10.287.600:FF:000002">
    <property type="entry name" value="Tubulin beta chain"/>
    <property type="match status" value="1"/>
</dbReference>
<dbReference type="FunFam" id="3.30.1330.20:FF:000002">
    <property type="entry name" value="Tubulin beta chain"/>
    <property type="match status" value="1"/>
</dbReference>
<dbReference type="FunFam" id="3.40.50.1440:FF:000005">
    <property type="entry name" value="Tubulin beta chain"/>
    <property type="match status" value="1"/>
</dbReference>
<dbReference type="Gene3D" id="1.10.287.600">
    <property type="entry name" value="Helix hairpin bin"/>
    <property type="match status" value="1"/>
</dbReference>
<dbReference type="Gene3D" id="3.30.1330.20">
    <property type="entry name" value="Tubulin/FtsZ, C-terminal domain"/>
    <property type="match status" value="1"/>
</dbReference>
<dbReference type="Gene3D" id="3.40.50.1440">
    <property type="entry name" value="Tubulin/FtsZ, GTPase domain"/>
    <property type="match status" value="1"/>
</dbReference>
<dbReference type="InterPro" id="IPR002453">
    <property type="entry name" value="Beta_tubulin"/>
</dbReference>
<dbReference type="InterPro" id="IPR008280">
    <property type="entry name" value="Tub_FtsZ_C"/>
</dbReference>
<dbReference type="InterPro" id="IPR000217">
    <property type="entry name" value="Tubulin"/>
</dbReference>
<dbReference type="InterPro" id="IPR037103">
    <property type="entry name" value="Tubulin/FtsZ-like_C"/>
</dbReference>
<dbReference type="InterPro" id="IPR018316">
    <property type="entry name" value="Tubulin/FtsZ_2-layer-sand-dom"/>
</dbReference>
<dbReference type="InterPro" id="IPR036525">
    <property type="entry name" value="Tubulin/FtsZ_GTPase_sf"/>
</dbReference>
<dbReference type="InterPro" id="IPR023123">
    <property type="entry name" value="Tubulin_C"/>
</dbReference>
<dbReference type="InterPro" id="IPR017975">
    <property type="entry name" value="Tubulin_CS"/>
</dbReference>
<dbReference type="InterPro" id="IPR003008">
    <property type="entry name" value="Tubulin_FtsZ_GTPase"/>
</dbReference>
<dbReference type="PANTHER" id="PTHR11588">
    <property type="entry name" value="TUBULIN"/>
    <property type="match status" value="1"/>
</dbReference>
<dbReference type="Pfam" id="PF00091">
    <property type="entry name" value="Tubulin"/>
    <property type="match status" value="1"/>
</dbReference>
<dbReference type="Pfam" id="PF03953">
    <property type="entry name" value="Tubulin_C"/>
    <property type="match status" value="1"/>
</dbReference>
<dbReference type="PRINTS" id="PR01163">
    <property type="entry name" value="BETATUBULIN"/>
</dbReference>
<dbReference type="PRINTS" id="PR01161">
    <property type="entry name" value="TUBULIN"/>
</dbReference>
<dbReference type="SMART" id="SM00864">
    <property type="entry name" value="Tubulin"/>
    <property type="match status" value="1"/>
</dbReference>
<dbReference type="SMART" id="SM00865">
    <property type="entry name" value="Tubulin_C"/>
    <property type="match status" value="1"/>
</dbReference>
<dbReference type="SUPFAM" id="SSF55307">
    <property type="entry name" value="Tubulin C-terminal domain-like"/>
    <property type="match status" value="1"/>
</dbReference>
<dbReference type="SUPFAM" id="SSF52490">
    <property type="entry name" value="Tubulin nucleotide-binding domain-like"/>
    <property type="match status" value="1"/>
</dbReference>
<dbReference type="PROSITE" id="PS00227">
    <property type="entry name" value="TUBULIN"/>
    <property type="match status" value="1"/>
</dbReference>
<feature type="chain" id="PRO_0000048382" description="Tubulin beta-2 chain">
    <location>
        <begin position="1"/>
        <end position="449"/>
    </location>
</feature>
<feature type="region of interest" description="Disordered" evidence="3">
    <location>
        <begin position="426"/>
        <end position="449"/>
    </location>
</feature>
<feature type="compositionally biased region" description="Acidic residues" evidence="3">
    <location>
        <begin position="429"/>
        <end position="443"/>
    </location>
</feature>
<feature type="binding site" evidence="2">
    <location>
        <position position="11"/>
    </location>
    <ligand>
        <name>GTP</name>
        <dbReference type="ChEBI" id="CHEBI:37565"/>
    </ligand>
</feature>
<feature type="binding site" evidence="1">
    <location>
        <position position="69"/>
    </location>
    <ligand>
        <name>GTP</name>
        <dbReference type="ChEBI" id="CHEBI:37565"/>
    </ligand>
</feature>
<feature type="binding site" evidence="1">
    <location>
        <position position="69"/>
    </location>
    <ligand>
        <name>Mg(2+)</name>
        <dbReference type="ChEBI" id="CHEBI:18420"/>
    </ligand>
</feature>
<feature type="binding site" evidence="2">
    <location>
        <position position="138"/>
    </location>
    <ligand>
        <name>GTP</name>
        <dbReference type="ChEBI" id="CHEBI:37565"/>
    </ligand>
</feature>
<feature type="binding site" evidence="2">
    <location>
        <position position="142"/>
    </location>
    <ligand>
        <name>GTP</name>
        <dbReference type="ChEBI" id="CHEBI:37565"/>
    </ligand>
</feature>
<feature type="binding site" evidence="2">
    <location>
        <position position="143"/>
    </location>
    <ligand>
        <name>GTP</name>
        <dbReference type="ChEBI" id="CHEBI:37565"/>
    </ligand>
</feature>
<feature type="binding site" evidence="2">
    <location>
        <position position="144"/>
    </location>
    <ligand>
        <name>GTP</name>
        <dbReference type="ChEBI" id="CHEBI:37565"/>
    </ligand>
</feature>
<feature type="binding site" evidence="2">
    <location>
        <position position="204"/>
    </location>
    <ligand>
        <name>GTP</name>
        <dbReference type="ChEBI" id="CHEBI:37565"/>
    </ligand>
</feature>
<feature type="binding site" evidence="2">
    <location>
        <position position="226"/>
    </location>
    <ligand>
        <name>GTP</name>
        <dbReference type="ChEBI" id="CHEBI:37565"/>
    </ligand>
</feature>
<protein>
    <recommendedName>
        <fullName>Tubulin beta-2 chain</fullName>
    </recommendedName>
    <alternativeName>
        <fullName>Beta-2-tubulin</fullName>
    </alternativeName>
</protein>
<reference key="1">
    <citation type="journal article" date="1987" name="Plant Mol. Biol.">
        <title>The isolation, characterization and sequence of two divergent beta-tubulin genes from soybean (Glycine max L.).</title>
        <authorList>
            <person name="Guiltinan M.J."/>
            <person name="Ma D.-P."/>
            <person name="Barker R.F."/>
            <person name="Bustos M.M."/>
            <person name="Cyr R.J."/>
            <person name="Yadegari R."/>
            <person name="Fosket D.E."/>
        </authorList>
        <dbReference type="AGRICOLA" id="IND92001189"/>
    </citation>
    <scope>NUCLEOTIDE SEQUENCE [GENOMIC DNA]</scope>
</reference>
<evidence type="ECO:0000250" key="1">
    <source>
        <dbReference type="UniProtKB" id="P68363"/>
    </source>
</evidence>
<evidence type="ECO:0000250" key="2">
    <source>
        <dbReference type="UniProtKB" id="Q13509"/>
    </source>
</evidence>
<evidence type="ECO:0000256" key="3">
    <source>
        <dbReference type="SAM" id="MobiDB-lite"/>
    </source>
</evidence>
<evidence type="ECO:0000305" key="4"/>
<sequence length="449" mass="50628">MRESLHIQGGQCGNQIGAKFWEVVCAEHGIDPTGRYGGDSELQLERINVYYNEASCGRFVRRAVLMDLEPGTMDSVRSGPYGQIFRPDNFVFGQSGAGNNWAKGHYTEGAELIDSVLDVVRKEAENCDCLQGFQVCHSLGGGTGSGMGTLLISKIREEYPDRMMLTFSVFPSPKVSDTVVEPYNATLSVHQLVENADESMVLDNEALYDICFRTLKLTTPSFGDLNHLISATMSGVTCCLRFPGQLNSDLRKLAVNLIPFPRLHFFMVGFAPLASRGSQQYRALSVPELTQQMWDSKNMMCAADPRHGRYLTASAMFRGKMSTKEVDEQMINVQNKNSSYFVEWIPHNVKSTVCDIPPTGLRMASTFIGNSTSIQEMFRRVSEQFTAMFRRKAFLHWYTGEGMDEMEFTEAESNMNDLVSEYQQYQDATADEDEYEEEEEEEEFAQHDM</sequence>
<keyword id="KW-0963">Cytoplasm</keyword>
<keyword id="KW-0206">Cytoskeleton</keyword>
<keyword id="KW-0342">GTP-binding</keyword>
<keyword id="KW-0460">Magnesium</keyword>
<keyword id="KW-0479">Metal-binding</keyword>
<keyword id="KW-0493">Microtubule</keyword>
<keyword id="KW-0547">Nucleotide-binding</keyword>
<keyword id="KW-1185">Reference proteome</keyword>
<accession>P12460</accession>
<proteinExistence type="inferred from homology"/>
<comment type="function">
    <text>Tubulin is the major constituent of microtubules, a cylinder consisting of laterally associated linear protofilaments composed of alpha- and beta-tubulin heterodimers. Microtubules grow by the addition of GTP-tubulin dimers to the microtubule end, where a stabilizing cap forms. Below the cap, tubulin dimers are in GDP-bound state, owing to GTPase activity of alpha-tubulin.</text>
</comment>
<comment type="cofactor">
    <cofactor evidence="1">
        <name>Mg(2+)</name>
        <dbReference type="ChEBI" id="CHEBI:18420"/>
    </cofactor>
</comment>
<comment type="subunit">
    <text>Dimer of alpha and beta chains. A typical microtubule is a hollow water-filled tube with an outer diameter of 25 nm and an inner diameter of 15 nM. Alpha-beta heterodimers associate head-to-tail to form protofilaments running lengthwise along the microtubule wall with the beta-tubulin subunit facing the microtubule plus end conferring a structural polarity. Microtubules usually have 13 protofilaments but different protofilament numbers can be found in some organisms and specialized cells.</text>
</comment>
<comment type="subcellular location">
    <subcellularLocation>
        <location>Cytoplasm</location>
        <location>Cytoskeleton</location>
    </subcellularLocation>
</comment>
<comment type="similarity">
    <text evidence="4">Belongs to the tubulin family.</text>
</comment>